<name>RK33_ORYSI</name>
<dbReference type="EMBL" id="AY522329">
    <property type="protein sequence ID" value="AAS46068.1"/>
    <property type="molecule type" value="Genomic_DNA"/>
</dbReference>
<dbReference type="RefSeq" id="YP_009161385.1">
    <property type="nucleotide sequence ID" value="NC_027678.1"/>
</dbReference>
<dbReference type="RefSeq" id="YP_654228.1">
    <property type="nucleotide sequence ID" value="NC_008155.1"/>
</dbReference>
<dbReference type="STRING" id="39946.P0C456"/>
<dbReference type="GeneID" id="4126892"/>
<dbReference type="Proteomes" id="UP000007015">
    <property type="component" value="Chloroplast"/>
</dbReference>
<dbReference type="GO" id="GO:0009507">
    <property type="term" value="C:chloroplast"/>
    <property type="evidence" value="ECO:0007669"/>
    <property type="project" value="UniProtKB-SubCell"/>
</dbReference>
<dbReference type="GO" id="GO:0009536">
    <property type="term" value="C:plastid"/>
    <property type="evidence" value="ECO:0000305"/>
    <property type="project" value="Gramene"/>
</dbReference>
<dbReference type="GO" id="GO:1990904">
    <property type="term" value="C:ribonucleoprotein complex"/>
    <property type="evidence" value="ECO:0007669"/>
    <property type="project" value="UniProtKB-KW"/>
</dbReference>
<dbReference type="GO" id="GO:0005840">
    <property type="term" value="C:ribosome"/>
    <property type="evidence" value="ECO:0007669"/>
    <property type="project" value="UniProtKB-KW"/>
</dbReference>
<dbReference type="GO" id="GO:0003735">
    <property type="term" value="F:structural constituent of ribosome"/>
    <property type="evidence" value="ECO:0007669"/>
    <property type="project" value="InterPro"/>
</dbReference>
<dbReference type="GO" id="GO:0006412">
    <property type="term" value="P:translation"/>
    <property type="evidence" value="ECO:0007669"/>
    <property type="project" value="UniProtKB-UniRule"/>
</dbReference>
<dbReference type="Gene3D" id="2.20.28.120">
    <property type="entry name" value="Ribosomal protein L33"/>
    <property type="match status" value="1"/>
</dbReference>
<dbReference type="HAMAP" id="MF_00294">
    <property type="entry name" value="Ribosomal_bL33"/>
    <property type="match status" value="1"/>
</dbReference>
<dbReference type="InterPro" id="IPR001705">
    <property type="entry name" value="Ribosomal_bL33"/>
</dbReference>
<dbReference type="InterPro" id="IPR018264">
    <property type="entry name" value="Ribosomal_bL33_CS"/>
</dbReference>
<dbReference type="InterPro" id="IPR038584">
    <property type="entry name" value="Ribosomal_bL33_sf"/>
</dbReference>
<dbReference type="InterPro" id="IPR011332">
    <property type="entry name" value="Ribosomal_zn-bd"/>
</dbReference>
<dbReference type="NCBIfam" id="NF001764">
    <property type="entry name" value="PRK00504.1"/>
    <property type="match status" value="1"/>
</dbReference>
<dbReference type="NCBIfam" id="NF001860">
    <property type="entry name" value="PRK00595.1"/>
    <property type="match status" value="1"/>
</dbReference>
<dbReference type="NCBIfam" id="TIGR01023">
    <property type="entry name" value="rpmG_bact"/>
    <property type="match status" value="1"/>
</dbReference>
<dbReference type="PANTHER" id="PTHR43168">
    <property type="entry name" value="50S RIBOSOMAL PROTEIN L33, CHLOROPLASTIC"/>
    <property type="match status" value="1"/>
</dbReference>
<dbReference type="PANTHER" id="PTHR43168:SF2">
    <property type="entry name" value="LARGE RIBOSOMAL SUBUNIT PROTEIN BL33C"/>
    <property type="match status" value="1"/>
</dbReference>
<dbReference type="Pfam" id="PF00471">
    <property type="entry name" value="Ribosomal_L33"/>
    <property type="match status" value="1"/>
</dbReference>
<dbReference type="SUPFAM" id="SSF57829">
    <property type="entry name" value="Zn-binding ribosomal proteins"/>
    <property type="match status" value="1"/>
</dbReference>
<dbReference type="PROSITE" id="PS00582">
    <property type="entry name" value="RIBOSOMAL_L33"/>
    <property type="match status" value="1"/>
</dbReference>
<reference key="1">
    <citation type="journal article" date="2004" name="Plant Physiol.">
        <title>A comparison of rice chloroplast genomes.</title>
        <authorList>
            <person name="Tang J."/>
            <person name="Xia H."/>
            <person name="Cao M."/>
            <person name="Zhang X."/>
            <person name="Zeng W."/>
            <person name="Hu S."/>
            <person name="Tong W."/>
            <person name="Wang J."/>
            <person name="Wang J."/>
            <person name="Yu J."/>
            <person name="Yang H."/>
            <person name="Zhu L."/>
        </authorList>
    </citation>
    <scope>NUCLEOTIDE SEQUENCE [LARGE SCALE GENOMIC DNA]</scope>
    <source>
        <strain>cv. 93-11</strain>
    </source>
</reference>
<accession>P0C456</accession>
<accession>P12141</accession>
<accession>Q6QY61</accession>
<accession>Q6Z503</accession>
<organism>
    <name type="scientific">Oryza sativa subsp. indica</name>
    <name type="common">Rice</name>
    <dbReference type="NCBI Taxonomy" id="39946"/>
    <lineage>
        <taxon>Eukaryota</taxon>
        <taxon>Viridiplantae</taxon>
        <taxon>Streptophyta</taxon>
        <taxon>Embryophyta</taxon>
        <taxon>Tracheophyta</taxon>
        <taxon>Spermatophyta</taxon>
        <taxon>Magnoliopsida</taxon>
        <taxon>Liliopsida</taxon>
        <taxon>Poales</taxon>
        <taxon>Poaceae</taxon>
        <taxon>BOP clade</taxon>
        <taxon>Oryzoideae</taxon>
        <taxon>Oryzeae</taxon>
        <taxon>Oryzinae</taxon>
        <taxon>Oryza</taxon>
        <taxon>Oryza sativa</taxon>
    </lineage>
</organism>
<feature type="initiator methionine" description="Removed" evidence="1">
    <location>
        <position position="1"/>
    </location>
</feature>
<feature type="chain" id="PRO_0000290053" description="Large ribosomal subunit protein bL33c">
    <location>
        <begin position="2"/>
        <end position="66"/>
    </location>
</feature>
<protein>
    <recommendedName>
        <fullName evidence="2">Large ribosomal subunit protein bL33c</fullName>
    </recommendedName>
    <alternativeName>
        <fullName>50S ribosomal protein L33, chloroplastic</fullName>
    </alternativeName>
</protein>
<keyword id="KW-0150">Chloroplast</keyword>
<keyword id="KW-0934">Plastid</keyword>
<keyword id="KW-1185">Reference proteome</keyword>
<keyword id="KW-0687">Ribonucleoprotein</keyword>
<keyword id="KW-0689">Ribosomal protein</keyword>
<gene>
    <name type="primary">rpl33</name>
    <name type="ORF">9311084</name>
</gene>
<evidence type="ECO:0000250" key="1"/>
<evidence type="ECO:0000305" key="2"/>
<comment type="subcellular location">
    <subcellularLocation>
        <location>Plastid</location>
        <location>Chloroplast</location>
    </subcellularLocation>
</comment>
<comment type="similarity">
    <text evidence="2">Belongs to the bacterial ribosomal protein bL33 family.</text>
</comment>
<geneLocation type="chloroplast"/>
<sequence length="66" mass="7643">MAKGKDVRIRVILQCVSCVRKGANEESAGISRYSTQKNRHNTPGQLELRKFCRYCRKHTIHAEIKK</sequence>
<proteinExistence type="inferred from homology"/>